<name>HISX_OCEIH</name>
<reference key="1">
    <citation type="journal article" date="2002" name="Nucleic Acids Res.">
        <title>Genome sequence of Oceanobacillus iheyensis isolated from the Iheya Ridge and its unexpected adaptive capabilities to extreme environments.</title>
        <authorList>
            <person name="Takami H."/>
            <person name="Takaki Y."/>
            <person name="Uchiyama I."/>
        </authorList>
    </citation>
    <scope>NUCLEOTIDE SEQUENCE [LARGE SCALE GENOMIC DNA]</scope>
    <source>
        <strain>DSM 14371 / CIP 107618 / JCM 11309 / KCTC 3954 / HTE831</strain>
    </source>
</reference>
<keyword id="KW-0028">Amino-acid biosynthesis</keyword>
<keyword id="KW-0368">Histidine biosynthesis</keyword>
<keyword id="KW-0479">Metal-binding</keyword>
<keyword id="KW-0520">NAD</keyword>
<keyword id="KW-0560">Oxidoreductase</keyword>
<keyword id="KW-1185">Reference proteome</keyword>
<keyword id="KW-0862">Zinc</keyword>
<evidence type="ECO:0000255" key="1">
    <source>
        <dbReference type="HAMAP-Rule" id="MF_01024"/>
    </source>
</evidence>
<proteinExistence type="inferred from homology"/>
<feature type="chain" id="PRO_0000135807" description="Histidinol dehydrogenase">
    <location>
        <begin position="1"/>
        <end position="427"/>
    </location>
</feature>
<feature type="active site" description="Proton acceptor" evidence="1">
    <location>
        <position position="321"/>
    </location>
</feature>
<feature type="active site" description="Proton acceptor" evidence="1">
    <location>
        <position position="322"/>
    </location>
</feature>
<feature type="binding site" evidence="1">
    <location>
        <position position="123"/>
    </location>
    <ligand>
        <name>NAD(+)</name>
        <dbReference type="ChEBI" id="CHEBI:57540"/>
    </ligand>
</feature>
<feature type="binding site" evidence="1">
    <location>
        <position position="185"/>
    </location>
    <ligand>
        <name>NAD(+)</name>
        <dbReference type="ChEBI" id="CHEBI:57540"/>
    </ligand>
</feature>
<feature type="binding site" evidence="1">
    <location>
        <position position="208"/>
    </location>
    <ligand>
        <name>NAD(+)</name>
        <dbReference type="ChEBI" id="CHEBI:57540"/>
    </ligand>
</feature>
<feature type="binding site" evidence="1">
    <location>
        <position position="231"/>
    </location>
    <ligand>
        <name>substrate</name>
    </ligand>
</feature>
<feature type="binding site" evidence="1">
    <location>
        <position position="253"/>
    </location>
    <ligand>
        <name>substrate</name>
    </ligand>
</feature>
<feature type="binding site" evidence="1">
    <location>
        <position position="253"/>
    </location>
    <ligand>
        <name>Zn(2+)</name>
        <dbReference type="ChEBI" id="CHEBI:29105"/>
    </ligand>
</feature>
<feature type="binding site" evidence="1">
    <location>
        <position position="256"/>
    </location>
    <ligand>
        <name>substrate</name>
    </ligand>
</feature>
<feature type="binding site" evidence="1">
    <location>
        <position position="256"/>
    </location>
    <ligand>
        <name>Zn(2+)</name>
        <dbReference type="ChEBI" id="CHEBI:29105"/>
    </ligand>
</feature>
<feature type="binding site" evidence="1">
    <location>
        <position position="322"/>
    </location>
    <ligand>
        <name>substrate</name>
    </ligand>
</feature>
<feature type="binding site" evidence="1">
    <location>
        <position position="355"/>
    </location>
    <ligand>
        <name>substrate</name>
    </ligand>
</feature>
<feature type="binding site" evidence="1">
    <location>
        <position position="355"/>
    </location>
    <ligand>
        <name>Zn(2+)</name>
        <dbReference type="ChEBI" id="CHEBI:29105"/>
    </ligand>
</feature>
<feature type="binding site" evidence="1">
    <location>
        <position position="409"/>
    </location>
    <ligand>
        <name>substrate</name>
    </ligand>
</feature>
<feature type="binding site" evidence="1">
    <location>
        <position position="414"/>
    </location>
    <ligand>
        <name>substrate</name>
    </ligand>
</feature>
<feature type="binding site" evidence="1">
    <location>
        <position position="414"/>
    </location>
    <ligand>
        <name>Zn(2+)</name>
        <dbReference type="ChEBI" id="CHEBI:29105"/>
    </ligand>
</feature>
<accession>Q8ESR8</accession>
<protein>
    <recommendedName>
        <fullName evidence="1">Histidinol dehydrogenase</fullName>
        <shortName evidence="1">HDH</shortName>
        <ecNumber evidence="1">1.1.1.23</ecNumber>
    </recommendedName>
</protein>
<dbReference type="EC" id="1.1.1.23" evidence="1"/>
<dbReference type="EMBL" id="BA000028">
    <property type="protein sequence ID" value="BAC12507.1"/>
    <property type="molecule type" value="Genomic_DNA"/>
</dbReference>
<dbReference type="RefSeq" id="WP_011064954.1">
    <property type="nucleotide sequence ID" value="NC_004193.1"/>
</dbReference>
<dbReference type="SMR" id="Q8ESR8"/>
<dbReference type="STRING" id="221109.gene:10732755"/>
<dbReference type="KEGG" id="oih:OB0551"/>
<dbReference type="eggNOG" id="COG0141">
    <property type="taxonomic scope" value="Bacteria"/>
</dbReference>
<dbReference type="HOGENOM" id="CLU_006732_3_0_9"/>
<dbReference type="OrthoDB" id="9805269at2"/>
<dbReference type="PhylomeDB" id="Q8ESR8"/>
<dbReference type="UniPathway" id="UPA00031">
    <property type="reaction ID" value="UER00014"/>
</dbReference>
<dbReference type="Proteomes" id="UP000000822">
    <property type="component" value="Chromosome"/>
</dbReference>
<dbReference type="GO" id="GO:0005829">
    <property type="term" value="C:cytosol"/>
    <property type="evidence" value="ECO:0007669"/>
    <property type="project" value="TreeGrafter"/>
</dbReference>
<dbReference type="GO" id="GO:0004399">
    <property type="term" value="F:histidinol dehydrogenase activity"/>
    <property type="evidence" value="ECO:0007669"/>
    <property type="project" value="UniProtKB-UniRule"/>
</dbReference>
<dbReference type="GO" id="GO:0051287">
    <property type="term" value="F:NAD binding"/>
    <property type="evidence" value="ECO:0007669"/>
    <property type="project" value="InterPro"/>
</dbReference>
<dbReference type="GO" id="GO:0008270">
    <property type="term" value="F:zinc ion binding"/>
    <property type="evidence" value="ECO:0007669"/>
    <property type="project" value="UniProtKB-UniRule"/>
</dbReference>
<dbReference type="GO" id="GO:0000105">
    <property type="term" value="P:L-histidine biosynthetic process"/>
    <property type="evidence" value="ECO:0007669"/>
    <property type="project" value="UniProtKB-UniRule"/>
</dbReference>
<dbReference type="CDD" id="cd06572">
    <property type="entry name" value="Histidinol_dh"/>
    <property type="match status" value="1"/>
</dbReference>
<dbReference type="FunFam" id="3.40.50.1980:FF:000001">
    <property type="entry name" value="Histidinol dehydrogenase"/>
    <property type="match status" value="1"/>
</dbReference>
<dbReference type="FunFam" id="3.40.50.1980:FF:000026">
    <property type="entry name" value="Histidinol dehydrogenase"/>
    <property type="match status" value="1"/>
</dbReference>
<dbReference type="Gene3D" id="1.20.5.1300">
    <property type="match status" value="1"/>
</dbReference>
<dbReference type="Gene3D" id="3.40.50.1980">
    <property type="entry name" value="Nitrogenase molybdenum iron protein domain"/>
    <property type="match status" value="2"/>
</dbReference>
<dbReference type="HAMAP" id="MF_01024">
    <property type="entry name" value="HisD"/>
    <property type="match status" value="1"/>
</dbReference>
<dbReference type="InterPro" id="IPR016161">
    <property type="entry name" value="Ald_DH/histidinol_DH"/>
</dbReference>
<dbReference type="InterPro" id="IPR001692">
    <property type="entry name" value="Histidinol_DH_CS"/>
</dbReference>
<dbReference type="InterPro" id="IPR022695">
    <property type="entry name" value="Histidinol_DH_monofunct"/>
</dbReference>
<dbReference type="InterPro" id="IPR012131">
    <property type="entry name" value="Hstdl_DH"/>
</dbReference>
<dbReference type="NCBIfam" id="TIGR00069">
    <property type="entry name" value="hisD"/>
    <property type="match status" value="1"/>
</dbReference>
<dbReference type="PANTHER" id="PTHR21256:SF2">
    <property type="entry name" value="HISTIDINE BIOSYNTHESIS TRIFUNCTIONAL PROTEIN"/>
    <property type="match status" value="1"/>
</dbReference>
<dbReference type="PANTHER" id="PTHR21256">
    <property type="entry name" value="HISTIDINOL DEHYDROGENASE HDH"/>
    <property type="match status" value="1"/>
</dbReference>
<dbReference type="Pfam" id="PF00815">
    <property type="entry name" value="Histidinol_dh"/>
    <property type="match status" value="1"/>
</dbReference>
<dbReference type="PIRSF" id="PIRSF000099">
    <property type="entry name" value="Histidinol_dh"/>
    <property type="match status" value="1"/>
</dbReference>
<dbReference type="PRINTS" id="PR00083">
    <property type="entry name" value="HOLDHDRGNASE"/>
</dbReference>
<dbReference type="SUPFAM" id="SSF53720">
    <property type="entry name" value="ALDH-like"/>
    <property type="match status" value="1"/>
</dbReference>
<dbReference type="PROSITE" id="PS00611">
    <property type="entry name" value="HISOL_DEHYDROGENASE"/>
    <property type="match status" value="1"/>
</dbReference>
<gene>
    <name evidence="1" type="primary">hisD</name>
    <name type="ordered locus">OB0551</name>
</gene>
<comment type="function">
    <text evidence="1">Catalyzes the sequential NAD-dependent oxidations of L-histidinol to L-histidinaldehyde and then to L-histidine.</text>
</comment>
<comment type="catalytic activity">
    <reaction evidence="1">
        <text>L-histidinol + 2 NAD(+) + H2O = L-histidine + 2 NADH + 3 H(+)</text>
        <dbReference type="Rhea" id="RHEA:20641"/>
        <dbReference type="ChEBI" id="CHEBI:15377"/>
        <dbReference type="ChEBI" id="CHEBI:15378"/>
        <dbReference type="ChEBI" id="CHEBI:57540"/>
        <dbReference type="ChEBI" id="CHEBI:57595"/>
        <dbReference type="ChEBI" id="CHEBI:57699"/>
        <dbReference type="ChEBI" id="CHEBI:57945"/>
        <dbReference type="EC" id="1.1.1.23"/>
    </reaction>
</comment>
<comment type="cofactor">
    <cofactor evidence="1">
        <name>Zn(2+)</name>
        <dbReference type="ChEBI" id="CHEBI:29105"/>
    </cofactor>
    <text evidence="1">Binds 1 zinc ion per subunit.</text>
</comment>
<comment type="pathway">
    <text evidence="1">Amino-acid biosynthesis; L-histidine biosynthesis; L-histidine from 5-phospho-alpha-D-ribose 1-diphosphate: step 9/9.</text>
</comment>
<comment type="similarity">
    <text evidence="1">Belongs to the histidinol dehydrogenase family.</text>
</comment>
<organism>
    <name type="scientific">Oceanobacillus iheyensis (strain DSM 14371 / CIP 107618 / JCM 11309 / KCTC 3954 / HTE831)</name>
    <dbReference type="NCBI Taxonomy" id="221109"/>
    <lineage>
        <taxon>Bacteria</taxon>
        <taxon>Bacillati</taxon>
        <taxon>Bacillota</taxon>
        <taxon>Bacilli</taxon>
        <taxon>Bacillales</taxon>
        <taxon>Bacillaceae</taxon>
        <taxon>Oceanobacillus</taxon>
    </lineage>
</organism>
<sequence>MEILSLHQWKQQQDTKSSTIRNKQVDQDVLRIIEQVQIQGDEALKHYTLQFDQVNLNSFEVTSNEWEQAIKKVDSTLLDALETAAGNIQRYQSEMLESNWSITPETGVKLGQQVNPLDRVGIYIPGGKASYPSTVLMDAIPAKVAGVKEIIITSPPNKNGEIDPVVLAAAKIAGVTKVYKVGGAQAIAALTYGTETIPSVDKIVGPGNIYVTRAKKWVFGDIAIDMIAGPSEICIFADSSAPVPYVAADLLSQAEHDEEASSLCITTDRSFAKLLQEEVNRQIPLLERKEIIEASISQNGKIIICDNNEEAINTINQLAPEHLQLMTIDSEQLCPKIKHAGAIFIGNYSSEPLGDYFAGPSHTLPTNGTAKFSSPLGVYDFVKKTSLIQYSKNKLAEAADTIITLAEAEGLTAHANAIRIRKENDNA</sequence>